<comment type="function">
    <text evidence="2">CRISPR (clustered regularly interspaced short palindromic repeat), is an adaptive immune system that provides protection against mobile genetic elements (viruses, transposable elements and conjugative plasmids). CRISPR clusters contain sequences complementary to antecedent mobile elements and target invading nucleic acids. Unlike many single-component effectors, this CRISPR-Cas system targets RNA (PubMed:28475872). CRISPR clusters are transcribed from pre-CRISPR RNA (crRNA) and processed into crRNA by this protein (PubMed:28475872). Cleaves linear target ssRNA in a pre-crRNA-dependent fashion, preferentially before U residues (PubMed:28475872). Binding a viable target RNA target activates this protein for non-specific RNA degradation in vitro (called collateral RNA degradation), which is fairly sensitive as it requires picomolar levels of viable target RNA (PubMed:28475872).</text>
</comment>
<comment type="cofactor">
    <cofactor evidence="1">
        <name>a divalent metal cation</name>
        <dbReference type="ChEBI" id="CHEBI:60240"/>
    </cofactor>
    <text evidence="1">Pre-crRNA processing is metal independent, while crRNA-guided target RNA cleavage is dependent on divalent metal.</text>
</comment>
<comment type="activity regulation">
    <text evidence="2">Target RNA acts as an activator for non-specific ssRNA degradation (PubMed:28475872).</text>
</comment>
<comment type="domain">
    <text evidence="1">The target ssRNase active sites are probably within the 2 HEPN-like folds, and the 2 folds interact in vivo.</text>
</comment>
<comment type="miscellaneous">
    <text evidence="5">Part of a type VI-A uridine-preferring CRISPR-Cas system.</text>
</comment>
<comment type="similarity">
    <text evidence="4">Belongs to the CRISPR-associated endoribonuclease Cas13a family.</text>
</comment>
<proteinExistence type="evidence at protein level"/>
<protein>
    <recommendedName>
        <fullName evidence="3">CRISPR-associated endoribonuclease Cas13a</fullName>
        <shortName>EndoRNase</shortName>
        <ecNumber>3.1.-.-</ecNumber>
    </recommendedName>
    <alternativeName>
        <fullName evidence="3">PprCas13a</fullName>
    </alternativeName>
</protein>
<sequence length="1154" mass="134252">MRVSKVKVKDGGKDKMVLVHRKTTGAQLVYSGQPVSNETSNILPEKKRQSFDLSTLNKTIIKFDTAKKQKLNVDQYKIVEKIFKYPKQELPKQIKAEEILPFLNHKFQEPVKYWKNGKEESFNLTLLIVEAVQAQDKRKLQPYYDWKTWYIQTKSDLLKKSIENNRIDLTENLSKRKKALLAWETEFTASGSIDLTHYHKVYMTDVLCKMLQDVKPLTDDKGKINTNAYHRGLKKALQNHQPAIFGTREVPNEANRADNQLSIYHLEVVKYLEHYFPIKTSKRRNTADDIAHYLKAQTLKTTIEKQLVNAIRANIIQQGKTNHHELKADTTSNDLIRIKTNEAFVLNLTGTCAFAANNIRNMVDNEQTNDILGKGDFIKSLLKDNTNSQLYSFFFGEGLSTNKAEKETQLWGIRGAVQQIRNNVNHYKKDALKTVFNISNFENPTITDPKQQTNYADTIYKARFINELEKIPEAFAQQLKTGGAVSYYTIENLKSLLTTFQFSLCRSTIPFAPGFKKVFNGGINYQNAKQDESFYELMLEQYLRKENFAEESYNARYFMLKLIYNNLFLPGFTTDRKAFADSVGFVQMQNKKQAEKVNPRKKEAYAFEAVRPMTAADSIADYMAYVQSELMQEQNKKEEKVAEETRINFEKFVLQVFIKGFDSFLRAKEFDFVQMPQPQLTATASNQQKADKLNQLEASITADCKLTPQYAKADDATHIAFYVFCKLLDAAHLSNLRNELIKFRESVNEFKFHHLLEIIEICLLSADVVPTDYRDLYSSEADCLARLRPFIEQGADITNWSDLFVQSDKHSPVIHANIELSVKYGTTKLLEQIINKDTQFKTTEANFTAWNTAQKSIEQLIKQREDHHEQWVKAKNADDKEKQERKREKSNFAQKFIEKHGDDYLDICDYINTYNWLDNKMHFVHLNRLHGLTIELLGRMAGFVALFDRDFQFFDEQQIADEFKLHGFVNLHSIDKKLNEVPTKKIKEIYDIRNKIIQINGNKINESVRANLIQFISSKRNYYNNAFLHVSNDEIKEKQMYDIRNHIAHFNYLTKDAADFSLIDLINELRELLHYDRKLKNAVSKAFIDLFDKHGMILKLKLNADHKLKVESLEPKKIYHLGSSAKDKPEYQYCTNQVMMAYCNMCRSLLEMKK</sequence>
<feature type="chain" id="PRO_0000442271" description="CRISPR-associated endoribonuclease Cas13a">
    <location>
        <begin position="1"/>
        <end position="1154"/>
    </location>
</feature>
<feature type="region of interest" description="HEPN-like fold 1" evidence="1">
    <location>
        <begin position="330"/>
        <end position="466"/>
    </location>
</feature>
<feature type="region of interest" description="HEPN-like fold 2" evidence="1">
    <location>
        <begin position="923"/>
        <end position="1154"/>
    </location>
</feature>
<reference key="1">
    <citation type="journal article" date="2011" name="Stand. Genomic Sci.">
        <title>Complete genome sequence of Paludibacter propionicigenes type strain (WB4).</title>
        <authorList>
            <person name="Gronow S."/>
            <person name="Munk C."/>
            <person name="Lapidus A."/>
            <person name="Nolan M."/>
            <person name="Lucas S."/>
            <person name="Hammon N."/>
            <person name="Deshpande S."/>
            <person name="Cheng J.F."/>
            <person name="Tapia R."/>
            <person name="Han C."/>
            <person name="Goodwin L."/>
            <person name="Pitluck S."/>
            <person name="Liolios K."/>
            <person name="Ivanova N."/>
            <person name="Mavromatis K."/>
            <person name="Mikhailova N."/>
            <person name="Pati A."/>
            <person name="Chen A."/>
            <person name="Palaniappan K."/>
            <person name="Land M."/>
            <person name="Hauser L."/>
            <person name="Chang Y.J."/>
            <person name="Jeffries C.D."/>
            <person name="Brambilla E."/>
            <person name="Rohde M."/>
            <person name="Goker M."/>
            <person name="Detter J.C."/>
            <person name="Woyke T."/>
            <person name="Bristow J."/>
            <person name="Eisen J.A."/>
            <person name="Markowitz V."/>
            <person name="Hugenholtz P."/>
            <person name="Kyrpides N.C."/>
            <person name="Klenk H.P."/>
        </authorList>
    </citation>
    <scope>NUCLEOTIDE SEQUENCE [LARGE SCALE GENOMIC DNA]</scope>
    <source>
        <strain>DSM 17365 / JCM 13257 / WB4</strain>
    </source>
</reference>
<reference key="2">
    <citation type="journal article" date="2017" name="Mol. Cell">
        <title>RNA targeting by functionally orthogonal type VI-A CRISPR-Cas enzymes.</title>
        <authorList>
            <person name="East-Seletsky A."/>
            <person name="O'Connell M.R."/>
            <person name="Burstein D."/>
            <person name="Knott G.J."/>
            <person name="Doudna J.A."/>
        </authorList>
    </citation>
    <scope>FUNCTION IN CRRNA PROCESSING</scope>
    <scope>FUNCTION IN TARGET SSRNA CLEAVAGE</scope>
    <scope>FUNCTION AS AN ENDORIBONUCLEASE</scope>
    <scope>ACTIVITY REGULATION</scope>
</reference>
<name>CS13A_PALPW</name>
<dbReference type="EC" id="3.1.-.-"/>
<dbReference type="EMBL" id="CP002345">
    <property type="protein sequence ID" value="ADQ78341.1"/>
    <property type="molecule type" value="Genomic_DNA"/>
</dbReference>
<dbReference type="RefSeq" id="WP_013443710.1">
    <property type="nucleotide sequence ID" value="NC_014734.1"/>
</dbReference>
<dbReference type="SMR" id="E4T0I2"/>
<dbReference type="KEGG" id="ppn:Palpr_0179"/>
<dbReference type="eggNOG" id="ENOG5032JQS">
    <property type="taxonomic scope" value="Bacteria"/>
</dbReference>
<dbReference type="HOGENOM" id="CLU_280435_0_0_10"/>
<dbReference type="OrthoDB" id="3010189at2"/>
<dbReference type="Proteomes" id="UP000008718">
    <property type="component" value="Chromosome"/>
</dbReference>
<dbReference type="GO" id="GO:0004519">
    <property type="term" value="F:endonuclease activity"/>
    <property type="evidence" value="ECO:0007669"/>
    <property type="project" value="UniProtKB-KW"/>
</dbReference>
<dbReference type="GO" id="GO:0003723">
    <property type="term" value="F:RNA binding"/>
    <property type="evidence" value="ECO:0007669"/>
    <property type="project" value="UniProtKB-KW"/>
</dbReference>
<dbReference type="GO" id="GO:0051607">
    <property type="term" value="P:defense response to virus"/>
    <property type="evidence" value="ECO:0007669"/>
    <property type="project" value="UniProtKB-KW"/>
</dbReference>
<dbReference type="InterPro" id="IPR053395">
    <property type="entry name" value="Cas13a_endoribonuclease"/>
</dbReference>
<dbReference type="NCBIfam" id="NF038188">
    <property type="entry name" value="cas13A_C2c2"/>
    <property type="match status" value="1"/>
</dbReference>
<accession>E4T0I2</accession>
<gene>
    <name evidence="3" type="primary">cas13a</name>
    <name type="ordered locus">Palpr_0179</name>
</gene>
<organism>
    <name type="scientific">Paludibacter propionicigenes (strain DSM 17365 / JCM 13257 / WB4)</name>
    <dbReference type="NCBI Taxonomy" id="694427"/>
    <lineage>
        <taxon>Bacteria</taxon>
        <taxon>Pseudomonadati</taxon>
        <taxon>Bacteroidota</taxon>
        <taxon>Bacteroidia</taxon>
        <taxon>Bacteroidales</taxon>
        <taxon>Paludibacteraceae</taxon>
        <taxon>Paludibacter</taxon>
    </lineage>
</organism>
<evidence type="ECO:0000250" key="1">
    <source>
        <dbReference type="UniProtKB" id="C7NBY4"/>
    </source>
</evidence>
<evidence type="ECO:0000269" key="2">
    <source>
    </source>
</evidence>
<evidence type="ECO:0000303" key="3">
    <source>
    </source>
</evidence>
<evidence type="ECO:0000305" key="4"/>
<evidence type="ECO:0000305" key="5">
    <source>
    </source>
</evidence>
<keyword id="KW-0051">Antiviral defense</keyword>
<keyword id="KW-0255">Endonuclease</keyword>
<keyword id="KW-0378">Hydrolase</keyword>
<keyword id="KW-0540">Nuclease</keyword>
<keyword id="KW-1185">Reference proteome</keyword>
<keyword id="KW-0677">Repeat</keyword>
<keyword id="KW-0694">RNA-binding</keyword>